<feature type="chain" id="PRO_0000387137" description="Ribosomal RNA small subunit methyltransferase H">
    <location>
        <begin position="1"/>
        <end position="311"/>
    </location>
</feature>
<feature type="binding site" evidence="1">
    <location>
        <begin position="32"/>
        <end position="34"/>
    </location>
    <ligand>
        <name>S-adenosyl-L-methionine</name>
        <dbReference type="ChEBI" id="CHEBI:59789"/>
    </ligand>
</feature>
<feature type="binding site" evidence="1">
    <location>
        <position position="52"/>
    </location>
    <ligand>
        <name>S-adenosyl-L-methionine</name>
        <dbReference type="ChEBI" id="CHEBI:59789"/>
    </ligand>
</feature>
<feature type="binding site" evidence="1">
    <location>
        <position position="79"/>
    </location>
    <ligand>
        <name>S-adenosyl-L-methionine</name>
        <dbReference type="ChEBI" id="CHEBI:59789"/>
    </ligand>
</feature>
<feature type="binding site" evidence="1">
    <location>
        <position position="100"/>
    </location>
    <ligand>
        <name>S-adenosyl-L-methionine</name>
        <dbReference type="ChEBI" id="CHEBI:59789"/>
    </ligand>
</feature>
<feature type="binding site" evidence="1">
    <location>
        <position position="107"/>
    </location>
    <ligand>
        <name>S-adenosyl-L-methionine</name>
        <dbReference type="ChEBI" id="CHEBI:59789"/>
    </ligand>
</feature>
<gene>
    <name evidence="1" type="primary">rsmH</name>
    <name type="synonym">mraW</name>
    <name type="ordered locus">SAHV_1169</name>
</gene>
<organism>
    <name type="scientific">Staphylococcus aureus (strain Mu3 / ATCC 700698)</name>
    <dbReference type="NCBI Taxonomy" id="418127"/>
    <lineage>
        <taxon>Bacteria</taxon>
        <taxon>Bacillati</taxon>
        <taxon>Bacillota</taxon>
        <taxon>Bacilli</taxon>
        <taxon>Bacillales</taxon>
        <taxon>Staphylococcaceae</taxon>
        <taxon>Staphylococcus</taxon>
    </lineage>
</organism>
<protein>
    <recommendedName>
        <fullName evidence="1">Ribosomal RNA small subunit methyltransferase H</fullName>
        <ecNumber evidence="1">2.1.1.199</ecNumber>
    </recommendedName>
    <alternativeName>
        <fullName evidence="1">16S rRNA m(4)C1402 methyltransferase</fullName>
    </alternativeName>
    <alternativeName>
        <fullName evidence="1">rRNA (cytosine-N(4)-)-methyltransferase RsmH</fullName>
    </alternativeName>
</protein>
<accession>A7X1B8</accession>
<keyword id="KW-0963">Cytoplasm</keyword>
<keyword id="KW-0489">Methyltransferase</keyword>
<keyword id="KW-0698">rRNA processing</keyword>
<keyword id="KW-0949">S-adenosyl-L-methionine</keyword>
<keyword id="KW-0808">Transferase</keyword>
<comment type="function">
    <text evidence="1">Specifically methylates the N4 position of cytidine in position 1402 (C1402) of 16S rRNA.</text>
</comment>
<comment type="catalytic activity">
    <reaction evidence="1">
        <text>cytidine(1402) in 16S rRNA + S-adenosyl-L-methionine = N(4)-methylcytidine(1402) in 16S rRNA + S-adenosyl-L-homocysteine + H(+)</text>
        <dbReference type="Rhea" id="RHEA:42928"/>
        <dbReference type="Rhea" id="RHEA-COMP:10286"/>
        <dbReference type="Rhea" id="RHEA-COMP:10287"/>
        <dbReference type="ChEBI" id="CHEBI:15378"/>
        <dbReference type="ChEBI" id="CHEBI:57856"/>
        <dbReference type="ChEBI" id="CHEBI:59789"/>
        <dbReference type="ChEBI" id="CHEBI:74506"/>
        <dbReference type="ChEBI" id="CHEBI:82748"/>
        <dbReference type="EC" id="2.1.1.199"/>
    </reaction>
</comment>
<comment type="subcellular location">
    <subcellularLocation>
        <location evidence="1">Cytoplasm</location>
    </subcellularLocation>
</comment>
<comment type="similarity">
    <text evidence="1">Belongs to the methyltransferase superfamily. RsmH family.</text>
</comment>
<dbReference type="EC" id="2.1.1.199" evidence="1"/>
<dbReference type="EMBL" id="AP009324">
    <property type="protein sequence ID" value="BAF78052.1"/>
    <property type="molecule type" value="Genomic_DNA"/>
</dbReference>
<dbReference type="RefSeq" id="WP_000468384.1">
    <property type="nucleotide sequence ID" value="NZ_CTYB01000010.1"/>
</dbReference>
<dbReference type="SMR" id="A7X1B8"/>
<dbReference type="KEGG" id="saw:SAHV_1169"/>
<dbReference type="HOGENOM" id="CLU_038422_2_0_9"/>
<dbReference type="GO" id="GO:0005737">
    <property type="term" value="C:cytoplasm"/>
    <property type="evidence" value="ECO:0007669"/>
    <property type="project" value="UniProtKB-SubCell"/>
</dbReference>
<dbReference type="GO" id="GO:0071424">
    <property type="term" value="F:rRNA (cytosine-N4-)-methyltransferase activity"/>
    <property type="evidence" value="ECO:0007669"/>
    <property type="project" value="UniProtKB-UniRule"/>
</dbReference>
<dbReference type="GO" id="GO:0070475">
    <property type="term" value="P:rRNA base methylation"/>
    <property type="evidence" value="ECO:0007669"/>
    <property type="project" value="UniProtKB-UniRule"/>
</dbReference>
<dbReference type="FunFam" id="1.10.150.170:FF:000001">
    <property type="entry name" value="Ribosomal RNA small subunit methyltransferase H"/>
    <property type="match status" value="1"/>
</dbReference>
<dbReference type="Gene3D" id="1.10.150.170">
    <property type="entry name" value="Putative methyltransferase TM0872, insert domain"/>
    <property type="match status" value="1"/>
</dbReference>
<dbReference type="Gene3D" id="3.40.50.150">
    <property type="entry name" value="Vaccinia Virus protein VP39"/>
    <property type="match status" value="1"/>
</dbReference>
<dbReference type="HAMAP" id="MF_01007">
    <property type="entry name" value="16SrRNA_methyltr_H"/>
    <property type="match status" value="1"/>
</dbReference>
<dbReference type="InterPro" id="IPR002903">
    <property type="entry name" value="RsmH"/>
</dbReference>
<dbReference type="InterPro" id="IPR023397">
    <property type="entry name" value="SAM-dep_MeTrfase_MraW_recog"/>
</dbReference>
<dbReference type="InterPro" id="IPR029063">
    <property type="entry name" value="SAM-dependent_MTases_sf"/>
</dbReference>
<dbReference type="NCBIfam" id="TIGR00006">
    <property type="entry name" value="16S rRNA (cytosine(1402)-N(4))-methyltransferase RsmH"/>
    <property type="match status" value="1"/>
</dbReference>
<dbReference type="PANTHER" id="PTHR11265:SF0">
    <property type="entry name" value="12S RRNA N4-METHYLCYTIDINE METHYLTRANSFERASE"/>
    <property type="match status" value="1"/>
</dbReference>
<dbReference type="PANTHER" id="PTHR11265">
    <property type="entry name" value="S-ADENOSYL-METHYLTRANSFERASE MRAW"/>
    <property type="match status" value="1"/>
</dbReference>
<dbReference type="Pfam" id="PF01795">
    <property type="entry name" value="Methyltransf_5"/>
    <property type="match status" value="1"/>
</dbReference>
<dbReference type="PIRSF" id="PIRSF004486">
    <property type="entry name" value="MraW"/>
    <property type="match status" value="1"/>
</dbReference>
<dbReference type="SUPFAM" id="SSF81799">
    <property type="entry name" value="Putative methyltransferase TM0872, insert domain"/>
    <property type="match status" value="1"/>
</dbReference>
<dbReference type="SUPFAM" id="SSF53335">
    <property type="entry name" value="S-adenosyl-L-methionine-dependent methyltransferases"/>
    <property type="match status" value="1"/>
</dbReference>
<evidence type="ECO:0000255" key="1">
    <source>
        <dbReference type="HAMAP-Rule" id="MF_01007"/>
    </source>
</evidence>
<proteinExistence type="inferred from homology"/>
<reference key="1">
    <citation type="journal article" date="2008" name="Antimicrob. Agents Chemother.">
        <title>Mutated response regulator graR is responsible for phenotypic conversion of Staphylococcus aureus from heterogeneous vancomycin-intermediate resistance to vancomycin-intermediate resistance.</title>
        <authorList>
            <person name="Neoh H.-M."/>
            <person name="Cui L."/>
            <person name="Yuzawa H."/>
            <person name="Takeuchi F."/>
            <person name="Matsuo M."/>
            <person name="Hiramatsu K."/>
        </authorList>
    </citation>
    <scope>NUCLEOTIDE SEQUENCE [LARGE SCALE GENOMIC DNA]</scope>
    <source>
        <strain>Mu3 / ATCC 700698</strain>
    </source>
</reference>
<name>RSMH_STAA1</name>
<sequence length="311" mass="35682">MFHHISVMLNETIDYLNVKENGVYIDCTLGGAGHALYLLNQLNDDGRLIAIDQDQTAIDNAKEVLKDHLHKVTFVHSNFRELTQILKDLNIEKVDGIYYDLGVSSPQLDIPERGFSYHHDATLDMRMDQTQELTAYEIVNNWSYEALVKIFYRYGEEKFSKQIARRIEAHREQQPITTTLELVDIIKEGIPAKARRKGGHPAKRVFQALRIAVNDELSAFEDSIEQAIELVKVDGRISVITFHSLEDRLCKQVFQEYEKGPEVPRGLPVIPEAYTPKLKRVNRKPITATEEDLDDNNRARSAKLRVAEILK</sequence>